<name>SPC42_CANGA</name>
<proteinExistence type="inferred from homology"/>
<evidence type="ECO:0000250" key="1"/>
<evidence type="ECO:0000255" key="2"/>
<evidence type="ECO:0000256" key="3">
    <source>
        <dbReference type="SAM" id="MobiDB-lite"/>
    </source>
</evidence>
<evidence type="ECO:0000305" key="4"/>
<sequence>MNISPTPKRYNSRGDRYYASQARGKVPEFEPYRKSGLNFNDGYSGINPPVYKNGLHSNLDDDKLVPEEIKLQRTVINDLISQNKELQTTVHTQREEIERLNIIIGQFRAKLTKYSVMNRKLEDELRGSERSSNALNKDRNDDRNDSILENSFENAEDYIQIPKLRYNSKGKQDKSPQTNDLNDRLSQLVQLLEKSQQNNSTKINSNSNDMSPPVCSSATPPERNNKPIMSSPKIRDPSEEDILCQESAELKSLENQIELVKKKLLIKRENELRKLSLENELIELMDQLSTDASPYRYGKSKGNFISTSKHEKHDENLSDIYGDYTGKNSLRKHNIKPFNPIKMDNILETPTPPNRRNSE</sequence>
<comment type="function">
    <text evidence="1">Forms a polymeric layer at the periphery of the spindle pole body (SPB) central plaque which has an essential function during SPB duplication and may facilitate attachment of the SPB to the nuclear membrane.</text>
</comment>
<comment type="subcellular location">
    <subcellularLocation>
        <location evidence="1">Nucleus</location>
    </subcellularLocation>
    <subcellularLocation>
        <location evidence="1">Cytoplasm</location>
        <location evidence="1">Cytoskeleton</location>
        <location evidence="1">Microtubule organizing center</location>
        <location evidence="1">Spindle pole body</location>
    </subcellularLocation>
</comment>
<comment type="similarity">
    <text evidence="4">Belongs to the SPC42 family.</text>
</comment>
<gene>
    <name type="primary">SPC42</name>
    <name type="ordered locus">CAGL0L01793g</name>
</gene>
<organism>
    <name type="scientific">Candida glabrata (strain ATCC 2001 / BCRC 20586 / JCM 3761 / NBRC 0622 / NRRL Y-65 / CBS 138)</name>
    <name type="common">Yeast</name>
    <name type="synonym">Nakaseomyces glabratus</name>
    <dbReference type="NCBI Taxonomy" id="284593"/>
    <lineage>
        <taxon>Eukaryota</taxon>
        <taxon>Fungi</taxon>
        <taxon>Dikarya</taxon>
        <taxon>Ascomycota</taxon>
        <taxon>Saccharomycotina</taxon>
        <taxon>Saccharomycetes</taxon>
        <taxon>Saccharomycetales</taxon>
        <taxon>Saccharomycetaceae</taxon>
        <taxon>Nakaseomyces</taxon>
    </lineage>
</organism>
<reference key="1">
    <citation type="journal article" date="2004" name="Nature">
        <title>Genome evolution in yeasts.</title>
        <authorList>
            <person name="Dujon B."/>
            <person name="Sherman D."/>
            <person name="Fischer G."/>
            <person name="Durrens P."/>
            <person name="Casaregola S."/>
            <person name="Lafontaine I."/>
            <person name="de Montigny J."/>
            <person name="Marck C."/>
            <person name="Neuveglise C."/>
            <person name="Talla E."/>
            <person name="Goffard N."/>
            <person name="Frangeul L."/>
            <person name="Aigle M."/>
            <person name="Anthouard V."/>
            <person name="Babour A."/>
            <person name="Barbe V."/>
            <person name="Barnay S."/>
            <person name="Blanchin S."/>
            <person name="Beckerich J.-M."/>
            <person name="Beyne E."/>
            <person name="Bleykasten C."/>
            <person name="Boisrame A."/>
            <person name="Boyer J."/>
            <person name="Cattolico L."/>
            <person name="Confanioleri F."/>
            <person name="de Daruvar A."/>
            <person name="Despons L."/>
            <person name="Fabre E."/>
            <person name="Fairhead C."/>
            <person name="Ferry-Dumazet H."/>
            <person name="Groppi A."/>
            <person name="Hantraye F."/>
            <person name="Hennequin C."/>
            <person name="Jauniaux N."/>
            <person name="Joyet P."/>
            <person name="Kachouri R."/>
            <person name="Kerrest A."/>
            <person name="Koszul R."/>
            <person name="Lemaire M."/>
            <person name="Lesur I."/>
            <person name="Ma L."/>
            <person name="Muller H."/>
            <person name="Nicaud J.-M."/>
            <person name="Nikolski M."/>
            <person name="Oztas S."/>
            <person name="Ozier-Kalogeropoulos O."/>
            <person name="Pellenz S."/>
            <person name="Potier S."/>
            <person name="Richard G.-F."/>
            <person name="Straub M.-L."/>
            <person name="Suleau A."/>
            <person name="Swennen D."/>
            <person name="Tekaia F."/>
            <person name="Wesolowski-Louvel M."/>
            <person name="Westhof E."/>
            <person name="Wirth B."/>
            <person name="Zeniou-Meyer M."/>
            <person name="Zivanovic Y."/>
            <person name="Bolotin-Fukuhara M."/>
            <person name="Thierry A."/>
            <person name="Bouchier C."/>
            <person name="Caudron B."/>
            <person name="Scarpelli C."/>
            <person name="Gaillardin C."/>
            <person name="Weissenbach J."/>
            <person name="Wincker P."/>
            <person name="Souciet J.-L."/>
        </authorList>
    </citation>
    <scope>NUCLEOTIDE SEQUENCE [LARGE SCALE GENOMIC DNA]</scope>
    <source>
        <strain>ATCC 2001 / BCRC 20586 / JCM 3761 / NBRC 0622 / NRRL Y-65 / CBS 138</strain>
    </source>
</reference>
<keyword id="KW-0175">Coiled coil</keyword>
<keyword id="KW-0963">Cytoplasm</keyword>
<keyword id="KW-0206">Cytoskeleton</keyword>
<keyword id="KW-0539">Nucleus</keyword>
<keyword id="KW-1185">Reference proteome</keyword>
<feature type="chain" id="PRO_0000409208" description="Spindle pole body component SPC42">
    <location>
        <begin position="1"/>
        <end position="359"/>
    </location>
</feature>
<feature type="region of interest" description="Disordered" evidence="3">
    <location>
        <begin position="123"/>
        <end position="145"/>
    </location>
</feature>
<feature type="region of interest" description="Disordered" evidence="3">
    <location>
        <begin position="195"/>
        <end position="238"/>
    </location>
</feature>
<feature type="coiled-coil region" evidence="2">
    <location>
        <begin position="67"/>
        <end position="289"/>
    </location>
</feature>
<feature type="compositionally biased region" description="Basic and acidic residues" evidence="3">
    <location>
        <begin position="136"/>
        <end position="145"/>
    </location>
</feature>
<feature type="compositionally biased region" description="Polar residues" evidence="3">
    <location>
        <begin position="195"/>
        <end position="219"/>
    </location>
</feature>
<dbReference type="EMBL" id="CR380958">
    <property type="protein sequence ID" value="CAG61818.1"/>
    <property type="molecule type" value="Genomic_DNA"/>
</dbReference>
<dbReference type="RefSeq" id="XP_448848.1">
    <property type="nucleotide sequence ID" value="XM_448848.1"/>
</dbReference>
<dbReference type="SMR" id="Q6FLP6"/>
<dbReference type="FunCoup" id="Q6FLP6">
    <property type="interactions" value="212"/>
</dbReference>
<dbReference type="STRING" id="284593.Q6FLP6"/>
<dbReference type="EnsemblFungi" id="CAGL0L01793g-T">
    <property type="protein sequence ID" value="CAGL0L01793g-T-p1"/>
    <property type="gene ID" value="CAGL0L01793g"/>
</dbReference>
<dbReference type="KEGG" id="cgr:2890669"/>
<dbReference type="CGD" id="CAL0135844">
    <property type="gene designation" value="CAGL0L01793g"/>
</dbReference>
<dbReference type="VEuPathDB" id="FungiDB:CAGL0L01793g"/>
<dbReference type="eggNOG" id="ENOG502RYX7">
    <property type="taxonomic scope" value="Eukaryota"/>
</dbReference>
<dbReference type="HOGENOM" id="CLU_056211_0_0_1"/>
<dbReference type="InParanoid" id="Q6FLP6"/>
<dbReference type="OMA" id="HNHATHR"/>
<dbReference type="Proteomes" id="UP000002428">
    <property type="component" value="Chromosome L"/>
</dbReference>
<dbReference type="GO" id="GO:0005737">
    <property type="term" value="C:cytoplasm"/>
    <property type="evidence" value="ECO:0007669"/>
    <property type="project" value="UniProtKB-KW"/>
</dbReference>
<dbReference type="GO" id="GO:0005634">
    <property type="term" value="C:nucleus"/>
    <property type="evidence" value="ECO:0007669"/>
    <property type="project" value="UniProtKB-SubCell"/>
</dbReference>
<dbReference type="GO" id="GO:0005816">
    <property type="term" value="C:spindle pole body"/>
    <property type="evidence" value="ECO:0007669"/>
    <property type="project" value="UniProtKB-SubCell"/>
</dbReference>
<dbReference type="InterPro" id="IPR021611">
    <property type="entry name" value="Spc42"/>
</dbReference>
<dbReference type="Pfam" id="PF11544">
    <property type="entry name" value="Spc42p"/>
    <property type="match status" value="1"/>
</dbReference>
<protein>
    <recommendedName>
        <fullName>Spindle pole body component SPC42</fullName>
    </recommendedName>
</protein>
<accession>Q6FLP6</accession>